<protein>
    <recommendedName>
        <fullName>Probable peroxygenase 4</fullName>
        <shortName>AtPXG4</shortName>
        <ecNumber>1.11.2.3</ecNumber>
    </recommendedName>
    <alternativeName>
        <fullName>Caleosin-4</fullName>
    </alternativeName>
</protein>
<organism>
    <name type="scientific">Arabidopsis thaliana</name>
    <name type="common">Mouse-ear cress</name>
    <dbReference type="NCBI Taxonomy" id="3702"/>
    <lineage>
        <taxon>Eukaryota</taxon>
        <taxon>Viridiplantae</taxon>
        <taxon>Streptophyta</taxon>
        <taxon>Embryophyta</taxon>
        <taxon>Tracheophyta</taxon>
        <taxon>Spermatophyta</taxon>
        <taxon>Magnoliopsida</taxon>
        <taxon>eudicotyledons</taxon>
        <taxon>Gunneridae</taxon>
        <taxon>Pentapetalae</taxon>
        <taxon>rosids</taxon>
        <taxon>malvids</taxon>
        <taxon>Brassicales</taxon>
        <taxon>Brassicaceae</taxon>
        <taxon>Camelineae</taxon>
        <taxon>Arabidopsis</taxon>
    </lineage>
</organism>
<sequence>MASSISTGVKFVPEEDNFLQRHVAFFDRNKDGIVYPSETFQGFRAIGCGYLLSAVASVFINIGLSSKTRPGKGFSIWFPIEVKNIHLAKHGSDSGVYDKDGRFVASKFEEIFTKHAHTHRDALTNEELKQLLKANKEPNDRKGWLAGYTEWKVLHYLCKDKNGLLHKDTVRAAYDGSLFEKLEKQRSSKTSKKHP</sequence>
<comment type="function">
    <text evidence="1 5">Calcium-binding peroxygenase involved in the degradation of storage lipid in oil bodies. May be involved in the interaction between oil bodies and vacuoles during seed germination (By similarity). Acts as a negative regulator of abscisic acid responses in non-seed tissues.</text>
</comment>
<comment type="catalytic activity">
    <reaction>
        <text>RH + ROOH = ROH + ROH.</text>
        <dbReference type="EC" id="1.11.2.3"/>
    </reaction>
</comment>
<comment type="cofactor">
    <cofactor evidence="1">
        <name>heme b</name>
        <dbReference type="ChEBI" id="CHEBI:60344"/>
    </cofactor>
    <text evidence="1">Binds 1 heme b (iron(II)-protoporphyrin IX) group.</text>
</comment>
<comment type="cofactor">
    <cofactor>
        <name>Ca(2+)</name>
        <dbReference type="ChEBI" id="CHEBI:29108"/>
    </cofactor>
</comment>
<comment type="subunit">
    <text evidence="1">Homodimer.</text>
</comment>
<comment type="subcellular location">
    <subcellularLocation>
        <location evidence="6">Lipid droplet</location>
    </subcellularLocation>
</comment>
<comment type="tissue specificity">
    <text evidence="4 5">Expressed in roots, leaves, stems, shoots, flowers and germinated seeds. Barely detected in dry seeds prior to germination. Preferentially expressed in vascular bundles and in guard cells.</text>
</comment>
<comment type="induction">
    <text evidence="4 5">Down-regulated by abscisic acid and high salt. Not induced by salt stress or desiccation.</text>
</comment>
<comment type="domain">
    <text>Transmembrane regions are predicted by sequence analysis tools, but these regions probably constitute hydrophobic domains associated to phospholipids.</text>
</comment>
<comment type="domain">
    <text>The proline-knot motif (70-79) may be involved in targeting to lipid bodies.</text>
</comment>
<comment type="disruption phenotype">
    <text evidence="5">No visible phenotype, but increased sensitivity to exogenous abscisic acid and osmotic stresses. Increased drought tolerance.</text>
</comment>
<comment type="similarity">
    <text evidence="6">Belongs to the caleosin family.</text>
</comment>
<keyword id="KW-0106">Calcium</keyword>
<keyword id="KW-0349">Heme</keyword>
<keyword id="KW-0408">Iron</keyword>
<keyword id="KW-0551">Lipid droplet</keyword>
<keyword id="KW-0479">Metal-binding</keyword>
<keyword id="KW-0560">Oxidoreductase</keyword>
<keyword id="KW-0597">Phosphoprotein</keyword>
<keyword id="KW-1185">Reference proteome</keyword>
<dbReference type="EC" id="1.11.2.3"/>
<dbReference type="EMBL" id="AC011663">
    <property type="protein sequence ID" value="AAG52340.1"/>
    <property type="molecule type" value="Genomic_DNA"/>
</dbReference>
<dbReference type="EMBL" id="CP002684">
    <property type="protein sequence ID" value="AEE35098.1"/>
    <property type="molecule type" value="Genomic_DNA"/>
</dbReference>
<dbReference type="EMBL" id="AY056102">
    <property type="protein sequence ID" value="AAL06990.1"/>
    <property type="molecule type" value="mRNA"/>
</dbReference>
<dbReference type="EMBL" id="AY143815">
    <property type="protein sequence ID" value="AAN28754.1"/>
    <property type="molecule type" value="mRNA"/>
</dbReference>
<dbReference type="EMBL" id="AY088279">
    <property type="protein sequence ID" value="AAM65818.1"/>
    <property type="molecule type" value="mRNA"/>
</dbReference>
<dbReference type="PIR" id="A96731">
    <property type="entry name" value="A96731"/>
</dbReference>
<dbReference type="RefSeq" id="NP_564995.1">
    <property type="nucleotide sequence ID" value="NM_105735.3"/>
</dbReference>
<dbReference type="FunCoup" id="Q9CAB7">
    <property type="interactions" value="105"/>
</dbReference>
<dbReference type="STRING" id="3702.Q9CAB7"/>
<dbReference type="PaxDb" id="3702-AT1G70670.1"/>
<dbReference type="ProteomicsDB" id="226133"/>
<dbReference type="EnsemblPlants" id="AT1G70670.1">
    <property type="protein sequence ID" value="AT1G70670.1"/>
    <property type="gene ID" value="AT1G70670"/>
</dbReference>
<dbReference type="GeneID" id="843404"/>
<dbReference type="Gramene" id="AT1G70670.1">
    <property type="protein sequence ID" value="AT1G70670.1"/>
    <property type="gene ID" value="AT1G70670"/>
</dbReference>
<dbReference type="KEGG" id="ath:AT1G70670"/>
<dbReference type="Araport" id="AT1G70670"/>
<dbReference type="TAIR" id="AT1G70670">
    <property type="gene designation" value="CLO4"/>
</dbReference>
<dbReference type="eggNOG" id="ENOG502QTJ2">
    <property type="taxonomic scope" value="Eukaryota"/>
</dbReference>
<dbReference type="HOGENOM" id="CLU_062049_2_1_1"/>
<dbReference type="InParanoid" id="Q9CAB7"/>
<dbReference type="OMA" id="RPGINDD"/>
<dbReference type="PhylomeDB" id="Q9CAB7"/>
<dbReference type="BRENDA" id="1.11.2.3">
    <property type="organism ID" value="399"/>
</dbReference>
<dbReference type="PRO" id="PR:Q9CAB7"/>
<dbReference type="Proteomes" id="UP000006548">
    <property type="component" value="Chromosome 1"/>
</dbReference>
<dbReference type="ExpressionAtlas" id="Q9CAB7">
    <property type="expression patterns" value="baseline and differential"/>
</dbReference>
<dbReference type="GO" id="GO:0005811">
    <property type="term" value="C:lipid droplet"/>
    <property type="evidence" value="ECO:0007669"/>
    <property type="project" value="UniProtKB-SubCell"/>
</dbReference>
<dbReference type="GO" id="GO:0046872">
    <property type="term" value="F:metal ion binding"/>
    <property type="evidence" value="ECO:0007669"/>
    <property type="project" value="UniProtKB-KW"/>
</dbReference>
<dbReference type="GO" id="GO:1990137">
    <property type="term" value="F:plant seed peroxygenase activity"/>
    <property type="evidence" value="ECO:0007669"/>
    <property type="project" value="UniProtKB-EC"/>
</dbReference>
<dbReference type="GO" id="GO:0009819">
    <property type="term" value="P:drought recovery"/>
    <property type="evidence" value="ECO:0000315"/>
    <property type="project" value="TAIR"/>
</dbReference>
<dbReference type="GO" id="GO:0009737">
    <property type="term" value="P:response to abscisic acid"/>
    <property type="evidence" value="ECO:0000315"/>
    <property type="project" value="TAIR"/>
</dbReference>
<dbReference type="InterPro" id="IPR007736">
    <property type="entry name" value="Caleosin-related"/>
</dbReference>
<dbReference type="InterPro" id="IPR011992">
    <property type="entry name" value="EF-hand-dom_pair"/>
</dbReference>
<dbReference type="PANTHER" id="PTHR31495:SF1">
    <property type="entry name" value="INACTIVE PEROXYGENASE-LIKE PROTEIN-RELATED"/>
    <property type="match status" value="1"/>
</dbReference>
<dbReference type="PANTHER" id="PTHR31495">
    <property type="entry name" value="PEROXYGENASE 3-RELATED"/>
    <property type="match status" value="1"/>
</dbReference>
<dbReference type="Pfam" id="PF05042">
    <property type="entry name" value="Caleosin"/>
    <property type="match status" value="1"/>
</dbReference>
<dbReference type="SUPFAM" id="SSF47473">
    <property type="entry name" value="EF-hand"/>
    <property type="match status" value="1"/>
</dbReference>
<evidence type="ECO:0000250" key="1"/>
<evidence type="ECO:0000250" key="2">
    <source>
        <dbReference type="UniProtKB" id="O81270"/>
    </source>
</evidence>
<evidence type="ECO:0000255" key="3"/>
<evidence type="ECO:0000269" key="4">
    <source>
    </source>
</evidence>
<evidence type="ECO:0000269" key="5">
    <source>
    </source>
</evidence>
<evidence type="ECO:0000305" key="6"/>
<gene>
    <name type="primary">PXG4</name>
    <name type="synonym">CLO4</name>
    <name type="ordered locus">At1g70670</name>
    <name type="ORF">F5A18.15</name>
</gene>
<name>PXG4_ARATH</name>
<proteinExistence type="evidence at protein level"/>
<accession>Q9CAB7</accession>
<accession>Q8L9R2</accession>
<reference key="1">
    <citation type="journal article" date="2000" name="Nature">
        <title>Sequence and analysis of chromosome 1 of the plant Arabidopsis thaliana.</title>
        <authorList>
            <person name="Theologis A."/>
            <person name="Ecker J.R."/>
            <person name="Palm C.J."/>
            <person name="Federspiel N.A."/>
            <person name="Kaul S."/>
            <person name="White O."/>
            <person name="Alonso J."/>
            <person name="Altafi H."/>
            <person name="Araujo R."/>
            <person name="Bowman C.L."/>
            <person name="Brooks S.Y."/>
            <person name="Buehler E."/>
            <person name="Chan A."/>
            <person name="Chao Q."/>
            <person name="Chen H."/>
            <person name="Cheuk R.F."/>
            <person name="Chin C.W."/>
            <person name="Chung M.K."/>
            <person name="Conn L."/>
            <person name="Conway A.B."/>
            <person name="Conway A.R."/>
            <person name="Creasy T.H."/>
            <person name="Dewar K."/>
            <person name="Dunn P."/>
            <person name="Etgu P."/>
            <person name="Feldblyum T.V."/>
            <person name="Feng J.-D."/>
            <person name="Fong B."/>
            <person name="Fujii C.Y."/>
            <person name="Gill J.E."/>
            <person name="Goldsmith A.D."/>
            <person name="Haas B."/>
            <person name="Hansen N.F."/>
            <person name="Hughes B."/>
            <person name="Huizar L."/>
            <person name="Hunter J.L."/>
            <person name="Jenkins J."/>
            <person name="Johnson-Hopson C."/>
            <person name="Khan S."/>
            <person name="Khaykin E."/>
            <person name="Kim C.J."/>
            <person name="Koo H.L."/>
            <person name="Kremenetskaia I."/>
            <person name="Kurtz D.B."/>
            <person name="Kwan A."/>
            <person name="Lam B."/>
            <person name="Langin-Hooper S."/>
            <person name="Lee A."/>
            <person name="Lee J.M."/>
            <person name="Lenz C.A."/>
            <person name="Li J.H."/>
            <person name="Li Y.-P."/>
            <person name="Lin X."/>
            <person name="Liu S.X."/>
            <person name="Liu Z.A."/>
            <person name="Luros J.S."/>
            <person name="Maiti R."/>
            <person name="Marziali A."/>
            <person name="Militscher J."/>
            <person name="Miranda M."/>
            <person name="Nguyen M."/>
            <person name="Nierman W.C."/>
            <person name="Osborne B.I."/>
            <person name="Pai G."/>
            <person name="Peterson J."/>
            <person name="Pham P.K."/>
            <person name="Rizzo M."/>
            <person name="Rooney T."/>
            <person name="Rowley D."/>
            <person name="Sakano H."/>
            <person name="Salzberg S.L."/>
            <person name="Schwartz J.R."/>
            <person name="Shinn P."/>
            <person name="Southwick A.M."/>
            <person name="Sun H."/>
            <person name="Tallon L.J."/>
            <person name="Tambunga G."/>
            <person name="Toriumi M.J."/>
            <person name="Town C.D."/>
            <person name="Utterback T."/>
            <person name="Van Aken S."/>
            <person name="Vaysberg M."/>
            <person name="Vysotskaia V.S."/>
            <person name="Walker M."/>
            <person name="Wu D."/>
            <person name="Yu G."/>
            <person name="Fraser C.M."/>
            <person name="Venter J.C."/>
            <person name="Davis R.W."/>
        </authorList>
    </citation>
    <scope>NUCLEOTIDE SEQUENCE [LARGE SCALE GENOMIC DNA]</scope>
    <source>
        <strain>cv. Columbia</strain>
    </source>
</reference>
<reference key="2">
    <citation type="journal article" date="2017" name="Plant J.">
        <title>Araport11: a complete reannotation of the Arabidopsis thaliana reference genome.</title>
        <authorList>
            <person name="Cheng C.Y."/>
            <person name="Krishnakumar V."/>
            <person name="Chan A.P."/>
            <person name="Thibaud-Nissen F."/>
            <person name="Schobel S."/>
            <person name="Town C.D."/>
        </authorList>
    </citation>
    <scope>GENOME REANNOTATION</scope>
    <source>
        <strain>cv. Columbia</strain>
    </source>
</reference>
<reference key="3">
    <citation type="journal article" date="2003" name="Science">
        <title>Empirical analysis of transcriptional activity in the Arabidopsis genome.</title>
        <authorList>
            <person name="Yamada K."/>
            <person name="Lim J."/>
            <person name="Dale J.M."/>
            <person name="Chen H."/>
            <person name="Shinn P."/>
            <person name="Palm C.J."/>
            <person name="Southwick A.M."/>
            <person name="Wu H.C."/>
            <person name="Kim C.J."/>
            <person name="Nguyen M."/>
            <person name="Pham P.K."/>
            <person name="Cheuk R.F."/>
            <person name="Karlin-Newmann G."/>
            <person name="Liu S.X."/>
            <person name="Lam B."/>
            <person name="Sakano H."/>
            <person name="Wu T."/>
            <person name="Yu G."/>
            <person name="Miranda M."/>
            <person name="Quach H.L."/>
            <person name="Tripp M."/>
            <person name="Chang C.H."/>
            <person name="Lee J.M."/>
            <person name="Toriumi M.J."/>
            <person name="Chan M.M."/>
            <person name="Tang C.C."/>
            <person name="Onodera C.S."/>
            <person name="Deng J.M."/>
            <person name="Akiyama K."/>
            <person name="Ansari Y."/>
            <person name="Arakawa T."/>
            <person name="Banh J."/>
            <person name="Banno F."/>
            <person name="Bowser L."/>
            <person name="Brooks S.Y."/>
            <person name="Carninci P."/>
            <person name="Chao Q."/>
            <person name="Choy N."/>
            <person name="Enju A."/>
            <person name="Goldsmith A.D."/>
            <person name="Gurjal M."/>
            <person name="Hansen N.F."/>
            <person name="Hayashizaki Y."/>
            <person name="Johnson-Hopson C."/>
            <person name="Hsuan V.W."/>
            <person name="Iida K."/>
            <person name="Karnes M."/>
            <person name="Khan S."/>
            <person name="Koesema E."/>
            <person name="Ishida J."/>
            <person name="Jiang P.X."/>
            <person name="Jones T."/>
            <person name="Kawai J."/>
            <person name="Kamiya A."/>
            <person name="Meyers C."/>
            <person name="Nakajima M."/>
            <person name="Narusaka M."/>
            <person name="Seki M."/>
            <person name="Sakurai T."/>
            <person name="Satou M."/>
            <person name="Tamse R."/>
            <person name="Vaysberg M."/>
            <person name="Wallender E.K."/>
            <person name="Wong C."/>
            <person name="Yamamura Y."/>
            <person name="Yuan S."/>
            <person name="Shinozaki K."/>
            <person name="Davis R.W."/>
            <person name="Theologis A."/>
            <person name="Ecker J.R."/>
        </authorList>
    </citation>
    <scope>NUCLEOTIDE SEQUENCE [LARGE SCALE MRNA]</scope>
    <source>
        <strain>cv. Columbia</strain>
    </source>
</reference>
<reference key="4">
    <citation type="submission" date="2002-03" db="EMBL/GenBank/DDBJ databases">
        <title>Full-length cDNA from Arabidopsis thaliana.</title>
        <authorList>
            <person name="Brover V.V."/>
            <person name="Troukhan M.E."/>
            <person name="Alexandrov N.A."/>
            <person name="Lu Y.-P."/>
            <person name="Flavell R.B."/>
            <person name="Feldmann K.A."/>
        </authorList>
    </citation>
    <scope>NUCLEOTIDE SEQUENCE [LARGE SCALE MRNA]</scope>
</reference>
<reference key="5">
    <citation type="journal article" date="2009" name="Plant Physiol. Biochem.">
        <title>Roles of a membrane-bound caleosin and putative peroxygenase in biotic and abiotic stress responses in Arabidopsis.</title>
        <authorList>
            <person name="Partridge M."/>
            <person name="Murphy D.J."/>
        </authorList>
    </citation>
    <scope>INDUCTION</scope>
    <scope>TISSUE SPECIFICITY</scope>
    <source>
        <strain>cv. Columbia</strain>
    </source>
</reference>
<reference key="6">
    <citation type="journal article" date="2011" name="Plant Cell Physiol.">
        <title>A stress-responsive caleosin-like protein, AtCLO4, acts as a negative regulator of ABA responses in Arabidopsis.</title>
        <authorList>
            <person name="Kim Y.Y."/>
            <person name="Jung K.W."/>
            <person name="Yoo K.S."/>
            <person name="Jeung J.U."/>
            <person name="Shin J.S."/>
        </authorList>
    </citation>
    <scope>FUNCTION</scope>
    <scope>INDUCTION</scope>
    <scope>CALCIUM-BINDING</scope>
    <scope>SUBCELLULAR LOCATION</scope>
    <scope>TISSUE SPECIFICITY</scope>
    <scope>DISRUPTION PHENOTYPE</scope>
    <source>
        <strain>cv. Columbia</strain>
    </source>
</reference>
<feature type="chain" id="PRO_0000415555" description="Probable peroxygenase 4">
    <location>
        <begin position="1"/>
        <end position="195"/>
    </location>
</feature>
<feature type="domain" description="EF-hand">
    <location>
        <begin position="14"/>
        <end position="49"/>
    </location>
</feature>
<feature type="short sequence motif" description="Proline-knot">
    <location>
        <begin position="70"/>
        <end position="79"/>
    </location>
</feature>
<feature type="binding site" description="axial binding residue" evidence="1">
    <location>
        <position position="22"/>
    </location>
    <ligand>
        <name>heme</name>
        <dbReference type="ChEBI" id="CHEBI:30413"/>
    </ligand>
    <ligandPart>
        <name>Fe</name>
        <dbReference type="ChEBI" id="CHEBI:18248"/>
    </ligandPart>
</feature>
<feature type="binding site" evidence="3">
    <location>
        <position position="27"/>
    </location>
    <ligand>
        <name>Ca(2+)</name>
        <dbReference type="ChEBI" id="CHEBI:29108"/>
    </ligand>
</feature>
<feature type="binding site" evidence="3">
    <location>
        <position position="29"/>
    </location>
    <ligand>
        <name>Ca(2+)</name>
        <dbReference type="ChEBI" id="CHEBI:29108"/>
    </ligand>
</feature>
<feature type="binding site" evidence="3">
    <location>
        <position position="31"/>
    </location>
    <ligand>
        <name>Ca(2+)</name>
        <dbReference type="ChEBI" id="CHEBI:29108"/>
    </ligand>
</feature>
<feature type="binding site" evidence="3">
    <location>
        <position position="38"/>
    </location>
    <ligand>
        <name>Ca(2+)</name>
        <dbReference type="ChEBI" id="CHEBI:29108"/>
    </ligand>
</feature>
<feature type="modified residue" description="Phosphoserine" evidence="2">
    <location>
        <position position="177"/>
    </location>
</feature>
<feature type="sequence conflict" description="In Ref. 4; AAM65818." evidence="6" ref="4">
    <original>G</original>
    <variation>C</variation>
    <location>
        <position position="95"/>
    </location>
</feature>